<evidence type="ECO:0000255" key="1">
    <source>
        <dbReference type="HAMAP-Rule" id="MF_00203"/>
    </source>
</evidence>
<dbReference type="EMBL" id="CP001020">
    <property type="protein sequence ID" value="ACJ20252.1"/>
    <property type="molecule type" value="Genomic_DNA"/>
</dbReference>
<dbReference type="RefSeq" id="WP_005770696.1">
    <property type="nucleotide sequence ID" value="NC_011528.1"/>
</dbReference>
<dbReference type="SMR" id="B6J7K3"/>
<dbReference type="KEGG" id="cbc:CbuK_1048"/>
<dbReference type="HOGENOM" id="CLU_014841_3_0_6"/>
<dbReference type="GO" id="GO:0005737">
    <property type="term" value="C:cytoplasm"/>
    <property type="evidence" value="ECO:0007669"/>
    <property type="project" value="UniProtKB-SubCell"/>
</dbReference>
<dbReference type="GO" id="GO:0009380">
    <property type="term" value="C:excinuclease repair complex"/>
    <property type="evidence" value="ECO:0007669"/>
    <property type="project" value="InterPro"/>
</dbReference>
<dbReference type="GO" id="GO:0003677">
    <property type="term" value="F:DNA binding"/>
    <property type="evidence" value="ECO:0007669"/>
    <property type="project" value="UniProtKB-UniRule"/>
</dbReference>
<dbReference type="GO" id="GO:0009381">
    <property type="term" value="F:excinuclease ABC activity"/>
    <property type="evidence" value="ECO:0007669"/>
    <property type="project" value="UniProtKB-UniRule"/>
</dbReference>
<dbReference type="GO" id="GO:0006289">
    <property type="term" value="P:nucleotide-excision repair"/>
    <property type="evidence" value="ECO:0007669"/>
    <property type="project" value="UniProtKB-UniRule"/>
</dbReference>
<dbReference type="GO" id="GO:0009432">
    <property type="term" value="P:SOS response"/>
    <property type="evidence" value="ECO:0007669"/>
    <property type="project" value="UniProtKB-UniRule"/>
</dbReference>
<dbReference type="CDD" id="cd10434">
    <property type="entry name" value="GIY-YIG_UvrC_Cho"/>
    <property type="match status" value="1"/>
</dbReference>
<dbReference type="FunFam" id="1.10.150.20:FF:000005">
    <property type="entry name" value="UvrABC system protein C"/>
    <property type="match status" value="1"/>
</dbReference>
<dbReference type="FunFam" id="3.30.420.340:FF:000001">
    <property type="entry name" value="UvrABC system protein C"/>
    <property type="match status" value="1"/>
</dbReference>
<dbReference type="FunFam" id="3.40.1440.10:FF:000001">
    <property type="entry name" value="UvrABC system protein C"/>
    <property type="match status" value="1"/>
</dbReference>
<dbReference type="FunFam" id="4.10.860.10:FF:000002">
    <property type="entry name" value="UvrABC system protein C"/>
    <property type="match status" value="1"/>
</dbReference>
<dbReference type="Gene3D" id="1.10.150.20">
    <property type="entry name" value="5' to 3' exonuclease, C-terminal subdomain"/>
    <property type="match status" value="1"/>
</dbReference>
<dbReference type="Gene3D" id="3.40.1440.10">
    <property type="entry name" value="GIY-YIG endonuclease"/>
    <property type="match status" value="1"/>
</dbReference>
<dbReference type="Gene3D" id="4.10.860.10">
    <property type="entry name" value="UVR domain"/>
    <property type="match status" value="1"/>
</dbReference>
<dbReference type="Gene3D" id="3.30.420.340">
    <property type="entry name" value="UvrC, RNAse H endonuclease domain"/>
    <property type="match status" value="1"/>
</dbReference>
<dbReference type="HAMAP" id="MF_00203">
    <property type="entry name" value="UvrC"/>
    <property type="match status" value="1"/>
</dbReference>
<dbReference type="InterPro" id="IPR000305">
    <property type="entry name" value="GIY-YIG_endonuc"/>
</dbReference>
<dbReference type="InterPro" id="IPR035901">
    <property type="entry name" value="GIY-YIG_endonuc_sf"/>
</dbReference>
<dbReference type="InterPro" id="IPR047296">
    <property type="entry name" value="GIY-YIG_UvrC_Cho"/>
</dbReference>
<dbReference type="InterPro" id="IPR003583">
    <property type="entry name" value="Hlx-hairpin-Hlx_DNA-bd_motif"/>
</dbReference>
<dbReference type="InterPro" id="IPR010994">
    <property type="entry name" value="RuvA_2-like"/>
</dbReference>
<dbReference type="InterPro" id="IPR001943">
    <property type="entry name" value="UVR_dom"/>
</dbReference>
<dbReference type="InterPro" id="IPR036876">
    <property type="entry name" value="UVR_dom_sf"/>
</dbReference>
<dbReference type="InterPro" id="IPR050066">
    <property type="entry name" value="UvrABC_protein_C"/>
</dbReference>
<dbReference type="InterPro" id="IPR004791">
    <property type="entry name" value="UvrC"/>
</dbReference>
<dbReference type="InterPro" id="IPR001162">
    <property type="entry name" value="UvrC_RNase_H_dom"/>
</dbReference>
<dbReference type="InterPro" id="IPR038476">
    <property type="entry name" value="UvrC_RNase_H_dom_sf"/>
</dbReference>
<dbReference type="NCBIfam" id="NF001824">
    <property type="entry name" value="PRK00558.1-5"/>
    <property type="match status" value="1"/>
</dbReference>
<dbReference type="NCBIfam" id="TIGR00194">
    <property type="entry name" value="uvrC"/>
    <property type="match status" value="1"/>
</dbReference>
<dbReference type="PANTHER" id="PTHR30562:SF1">
    <property type="entry name" value="UVRABC SYSTEM PROTEIN C"/>
    <property type="match status" value="1"/>
</dbReference>
<dbReference type="PANTHER" id="PTHR30562">
    <property type="entry name" value="UVRC/OXIDOREDUCTASE"/>
    <property type="match status" value="1"/>
</dbReference>
<dbReference type="Pfam" id="PF01541">
    <property type="entry name" value="GIY-YIG"/>
    <property type="match status" value="1"/>
</dbReference>
<dbReference type="Pfam" id="PF14520">
    <property type="entry name" value="HHH_5"/>
    <property type="match status" value="1"/>
</dbReference>
<dbReference type="Pfam" id="PF02151">
    <property type="entry name" value="UVR"/>
    <property type="match status" value="1"/>
</dbReference>
<dbReference type="Pfam" id="PF22920">
    <property type="entry name" value="UvrC_RNaseH"/>
    <property type="match status" value="1"/>
</dbReference>
<dbReference type="Pfam" id="PF08459">
    <property type="entry name" value="UvrC_RNaseH_dom"/>
    <property type="match status" value="1"/>
</dbReference>
<dbReference type="SMART" id="SM00465">
    <property type="entry name" value="GIYc"/>
    <property type="match status" value="1"/>
</dbReference>
<dbReference type="SMART" id="SM00278">
    <property type="entry name" value="HhH1"/>
    <property type="match status" value="2"/>
</dbReference>
<dbReference type="SUPFAM" id="SSF46600">
    <property type="entry name" value="C-terminal UvrC-binding domain of UvrB"/>
    <property type="match status" value="1"/>
</dbReference>
<dbReference type="SUPFAM" id="SSF82771">
    <property type="entry name" value="GIY-YIG endonuclease"/>
    <property type="match status" value="1"/>
</dbReference>
<dbReference type="SUPFAM" id="SSF47781">
    <property type="entry name" value="RuvA domain 2-like"/>
    <property type="match status" value="1"/>
</dbReference>
<dbReference type="PROSITE" id="PS50164">
    <property type="entry name" value="GIY_YIG"/>
    <property type="match status" value="1"/>
</dbReference>
<dbReference type="PROSITE" id="PS50151">
    <property type="entry name" value="UVR"/>
    <property type="match status" value="1"/>
</dbReference>
<dbReference type="PROSITE" id="PS50165">
    <property type="entry name" value="UVRC"/>
    <property type="match status" value="1"/>
</dbReference>
<reference key="1">
    <citation type="journal article" date="2009" name="Infect. Immun.">
        <title>Comparative genomics reveal extensive transposon-mediated genomic plasticity and diversity among potential effector proteins within the genus Coxiella.</title>
        <authorList>
            <person name="Beare P.A."/>
            <person name="Unsworth N."/>
            <person name="Andoh M."/>
            <person name="Voth D.E."/>
            <person name="Omsland A."/>
            <person name="Gilk S.D."/>
            <person name="Williams K.P."/>
            <person name="Sobral B.W."/>
            <person name="Kupko J.J. III"/>
            <person name="Porcella S.F."/>
            <person name="Samuel J.E."/>
            <person name="Heinzen R.A."/>
        </authorList>
    </citation>
    <scope>NUCLEOTIDE SEQUENCE [LARGE SCALE GENOMIC DNA]</scope>
    <source>
        <strain>CbuK_Q154</strain>
    </source>
</reference>
<keyword id="KW-0963">Cytoplasm</keyword>
<keyword id="KW-0227">DNA damage</keyword>
<keyword id="KW-0228">DNA excision</keyword>
<keyword id="KW-0234">DNA repair</keyword>
<keyword id="KW-0267">Excision nuclease</keyword>
<keyword id="KW-0742">SOS response</keyword>
<gene>
    <name evidence="1" type="primary">uvrC</name>
    <name type="ordered locus">CbuK_1048</name>
</gene>
<proteinExistence type="inferred from homology"/>
<comment type="function">
    <text evidence="1">The UvrABC repair system catalyzes the recognition and processing of DNA lesions. UvrC both incises the 5' and 3' sides of the lesion. The N-terminal half is responsible for the 3' incision and the C-terminal half is responsible for the 5' incision.</text>
</comment>
<comment type="subunit">
    <text evidence="1">Interacts with UvrB in an incision complex.</text>
</comment>
<comment type="subcellular location">
    <subcellularLocation>
        <location evidence="1">Cytoplasm</location>
    </subcellularLocation>
</comment>
<comment type="similarity">
    <text evidence="1">Belongs to the UvrC family.</text>
</comment>
<organism>
    <name type="scientific">Coxiella burnetii (strain CbuK_Q154)</name>
    <name type="common">Coxiella burnetii (strain Q154)</name>
    <dbReference type="NCBI Taxonomy" id="434924"/>
    <lineage>
        <taxon>Bacteria</taxon>
        <taxon>Pseudomonadati</taxon>
        <taxon>Pseudomonadota</taxon>
        <taxon>Gammaproteobacteria</taxon>
        <taxon>Legionellales</taxon>
        <taxon>Coxiellaceae</taxon>
        <taxon>Coxiella</taxon>
    </lineage>
</organism>
<sequence>MTIDNPSAFLKTLPTGSGVYQMQDAQGKVIYVGKARNLQKRVSSYFRRQLDSKTQAMMAQVQSIQTTITRNENEALLLEASFIKQFRPRYNVLLRDDKSYPYLYLATHQKFPRLDFYRGAKKAPGRYFGPYPNAGSVRENLALIQKLFKLRQCSESFFKNRTRPCLQYQIKRCTAPCVGYVNEQEYRRQVEDAILFFEGKNDQVIIKLTERMEVASENLVFEEAAHYRDQIRQLRRLQKQQIITGGKGNIDIIGIAESNGAIGFAILFIRSGRMIGHKPFFPNTPLGTTLQTALVEFIPQYYLSPLRNGDIPERIVTSEPLEDRLWIQRALSSGLNRKLAITDQKRAPYKQWQAMAALNAAQALSQHLAQKNTFALKLEAIQKSLALPNPIARIECFDISHTLGEATVASCVVFGEEGPIKKDYRRFNISGVTPGDDYGALRQVLTRRYVRLKEGEGILPDVLLIDGGMGQLRQAAEVLEELQVSGVILTAIAKGPGRKAGLEKLFVWGRREEIHLPADNIAFHLIQQIRDEAHRFAITAHCNRRAKRRVESTLQEIEGIGPKRRQKLLKYFGGLQELQRASIEEIARVPGVSETLAKAIYDACHQHKG</sequence>
<accession>B6J7K3</accession>
<feature type="chain" id="PRO_1000099472" description="UvrABC system protein C">
    <location>
        <begin position="1"/>
        <end position="609"/>
    </location>
</feature>
<feature type="domain" description="GIY-YIG" evidence="1">
    <location>
        <begin position="15"/>
        <end position="92"/>
    </location>
</feature>
<feature type="domain" description="UVR" evidence="1">
    <location>
        <begin position="202"/>
        <end position="237"/>
    </location>
</feature>
<name>UVRC_COXB1</name>
<protein>
    <recommendedName>
        <fullName evidence="1">UvrABC system protein C</fullName>
        <shortName evidence="1">Protein UvrC</shortName>
    </recommendedName>
    <alternativeName>
        <fullName evidence="1">Excinuclease ABC subunit C</fullName>
    </alternativeName>
</protein>